<organism>
    <name type="scientific">Acinetobacter baumannii</name>
    <dbReference type="NCBI Taxonomy" id="470"/>
    <lineage>
        <taxon>Bacteria</taxon>
        <taxon>Pseudomonadati</taxon>
        <taxon>Pseudomonadota</taxon>
        <taxon>Gammaproteobacteria</taxon>
        <taxon>Moraxellales</taxon>
        <taxon>Moraxellaceae</taxon>
        <taxon>Acinetobacter</taxon>
        <taxon>Acinetobacter calcoaceticus/baumannii complex</taxon>
    </lineage>
</organism>
<feature type="chain" id="PRO_0000445959" description="Probable solute-binding protein AdeT2">
    <location>
        <begin position="1"/>
        <end position="238"/>
    </location>
</feature>
<dbReference type="EMBL" id="GQ338838">
    <property type="protein sequence ID" value="ACU27399.1"/>
    <property type="molecule type" value="Genomic_DNA"/>
</dbReference>
<dbReference type="SMR" id="C7F8K7"/>
<dbReference type="STRING" id="400667.A1S_3092"/>
<dbReference type="OMA" id="DQVWCAY"/>
<dbReference type="GO" id="GO:0046677">
    <property type="term" value="P:response to antibiotic"/>
    <property type="evidence" value="ECO:0007669"/>
    <property type="project" value="UniProtKB-KW"/>
</dbReference>
<dbReference type="Gene3D" id="3.40.190.170">
    <property type="entry name" value="Bacterial extracellular solute-binding protein, family 7"/>
    <property type="match status" value="1"/>
</dbReference>
<dbReference type="InterPro" id="IPR045758">
    <property type="entry name" value="AdeT1/2"/>
</dbReference>
<dbReference type="InterPro" id="IPR038404">
    <property type="entry name" value="TRAP_DctP_sf"/>
</dbReference>
<dbReference type="Pfam" id="PF19582">
    <property type="entry name" value="AdeT1_2"/>
    <property type="match status" value="1"/>
</dbReference>
<dbReference type="SUPFAM" id="SSF53850">
    <property type="entry name" value="Periplasmic binding protein-like II"/>
    <property type="match status" value="1"/>
</dbReference>
<name>ADET2_ACIBA</name>
<proteinExistence type="inferred from homology"/>
<evidence type="ECO:0000269" key="1">
    <source>
    </source>
</evidence>
<evidence type="ECO:0000303" key="2">
    <source>
    </source>
</evidence>
<evidence type="ECO:0000305" key="3"/>
<evidence type="ECO:0000305" key="4">
    <source>
    </source>
</evidence>
<accession>C7F8K7</accession>
<comment type="function">
    <text evidence="1 4">Mediates antimicrobial resistance via active efflux. Contributes to resistance to antibiotics such as chloramphenicol, erythromycin and novobiocin (PubMed:21212056). May be part of a tripartite ATP-independent periplasmic (TRAP) transport system (Probable).</text>
</comment>
<comment type="disruption phenotype">
    <text evidence="1">Deletion of the gene results in increased susceptibility to different antibiotics, dyes, detergents and disinfectants.</text>
</comment>
<comment type="similarity">
    <text evidence="3">Belongs to the bacterial solute-binding protein 7 family.</text>
</comment>
<keyword id="KW-0046">Antibiotic resistance</keyword>
<keyword id="KW-0813">Transport</keyword>
<reference key="1">
    <citation type="journal article" date="2011" name="J. Antimicrob. Chemother.">
        <title>Molecular cloning and functional characterization of two novel membrane fusion proteins in conferring antimicrobial resistance in Acinetobacter baumannii.</title>
        <authorList>
            <person name="Srinivasan V.B."/>
            <person name="Rajamohan G."/>
            <person name="Pancholi P."/>
            <person name="Marcon M."/>
            <person name="Gebreyes W.A."/>
        </authorList>
    </citation>
    <scope>NUCLEOTIDE SEQUENCE [GENOMIC DNA]</scope>
    <scope>FUNCTION</scope>
    <scope>DISRUPTION PHENOTYPE</scope>
    <source>
        <strain>AC0037</strain>
    </source>
</reference>
<protein>
    <recommendedName>
        <fullName evidence="3">Probable solute-binding protein AdeT2</fullName>
    </recommendedName>
</protein>
<gene>
    <name evidence="2" type="primary">adeT2</name>
</gene>
<sequence length="238" mass="27284">MGSTSGIGLIPNNRTARNLLQLLNHPTIEKRLINKDYEAVGMIPVGTANMVMKTKKISKVAQLRGQRIGVLANNPPQQALVRSVGAQPVYVDLSNAIAQFQQNKIDIMPAPVYGLLPYNLQKDFGPDTQVINFPLAYFGVNIIIKPQAYPANFGRKIRAWFVQNSQLLTNRAIQWENHLPAYYWVDVSFYEKQSYDIMVAKIRNQYVRSGYYDAYFVELMKRLRCIDDPRYFECPMSR</sequence>